<name>YIHY_ECOLI</name>
<proteinExistence type="evidence at protein level"/>
<gene>
    <name type="primary">yihY</name>
    <name type="ordered locus">b3886</name>
    <name type="ordered locus">JW3857</name>
</gene>
<evidence type="ECO:0000255" key="1"/>
<evidence type="ECO:0000269" key="2">
    <source>
    </source>
</evidence>
<evidence type="ECO:0000305" key="3"/>
<evidence type="ECO:0000305" key="4">
    <source>
    </source>
</evidence>
<evidence type="ECO:0000305" key="5">
    <source>
    </source>
</evidence>
<feature type="chain" id="PRO_0000200981" description="UPF0761 membrane protein YihY">
    <location>
        <begin position="1"/>
        <end position="290"/>
    </location>
</feature>
<feature type="topological domain" description="Cytoplasmic" evidence="1">
    <location>
        <begin position="1"/>
        <end position="38"/>
    </location>
</feature>
<feature type="transmembrane region" description="Helical" evidence="1">
    <location>
        <begin position="39"/>
        <end position="61"/>
    </location>
</feature>
<feature type="topological domain" description="Periplasmic" evidence="1">
    <location>
        <begin position="62"/>
        <end position="100"/>
    </location>
</feature>
<feature type="transmembrane region" description="Helical" evidence="1">
    <location>
        <begin position="101"/>
        <end position="120"/>
    </location>
</feature>
<feature type="topological domain" description="Cytoplasmic" evidence="1">
    <location>
        <begin position="121"/>
        <end position="140"/>
    </location>
</feature>
<feature type="transmembrane region" description="Helical" evidence="1">
    <location>
        <begin position="141"/>
        <end position="163"/>
    </location>
</feature>
<feature type="topological domain" description="Periplasmic" evidence="1">
    <location>
        <begin position="164"/>
        <end position="182"/>
    </location>
</feature>
<feature type="transmembrane region" description="Helical" evidence="1">
    <location>
        <begin position="183"/>
        <end position="205"/>
    </location>
</feature>
<feature type="topological domain" description="Cytoplasmic" evidence="1">
    <location>
        <begin position="206"/>
        <end position="211"/>
    </location>
</feature>
<feature type="transmembrane region" description="Helical" evidence="1">
    <location>
        <begin position="212"/>
        <end position="234"/>
    </location>
</feature>
<feature type="topological domain" description="Periplasmic" evidence="1">
    <location>
        <begin position="235"/>
        <end position="243"/>
    </location>
</feature>
<feature type="transmembrane region" description="Helical" evidence="1">
    <location>
        <begin position="244"/>
        <end position="266"/>
    </location>
</feature>
<feature type="topological domain" description="Cytoplasmic" evidence="1">
    <location>
        <begin position="267"/>
        <end position="290"/>
    </location>
</feature>
<comment type="subcellular location">
    <subcellularLocation>
        <location evidence="2">Cell inner membrane</location>
        <topology evidence="2">Multi-pass membrane protein</topology>
    </subcellularLocation>
</comment>
<comment type="similarity">
    <text evidence="3">Belongs to the UPF0761 family.</text>
</comment>
<comment type="caution">
    <text evidence="4 5">Was originally (PubMed:8955422) thought to be the tRNA-processing ribonuclease BN (rbn). This was later proven not to be the case (PubMed:15764599).</text>
</comment>
<reference key="1">
    <citation type="journal article" date="1996" name="J. Bacteriol.">
        <title>Identification and characterization of the Escherichia coli rbn gene encoding the tRNA processing enzyme RNase BN.</title>
        <authorList>
            <person name="Callahan C."/>
            <person name="Deutscher M.P."/>
        </authorList>
    </citation>
    <scope>NUCLEOTIDE SEQUENCE [GENOMIC DNA]</scope>
    <source>
        <strain>B</strain>
        <strain>K12 / CA265</strain>
    </source>
</reference>
<reference key="2">
    <citation type="journal article" date="1993" name="Nucleic Acids Res.">
        <title>Analysis of the Escherichia coli genome. III. DNA sequence of the region from 87.2 to 89.2 minutes.</title>
        <authorList>
            <person name="Plunkett G. III"/>
            <person name="Burland V."/>
            <person name="Daniels D.L."/>
            <person name="Blattner F.R."/>
        </authorList>
    </citation>
    <scope>NUCLEOTIDE SEQUENCE [LARGE SCALE GENOMIC DNA]</scope>
    <source>
        <strain>K12 / MG1655 / ATCC 47076</strain>
    </source>
</reference>
<reference key="3">
    <citation type="journal article" date="1997" name="Science">
        <title>The complete genome sequence of Escherichia coli K-12.</title>
        <authorList>
            <person name="Blattner F.R."/>
            <person name="Plunkett G. III"/>
            <person name="Bloch C.A."/>
            <person name="Perna N.T."/>
            <person name="Burland V."/>
            <person name="Riley M."/>
            <person name="Collado-Vides J."/>
            <person name="Glasner J.D."/>
            <person name="Rode C.K."/>
            <person name="Mayhew G.F."/>
            <person name="Gregor J."/>
            <person name="Davis N.W."/>
            <person name="Kirkpatrick H.A."/>
            <person name="Goeden M.A."/>
            <person name="Rose D.J."/>
            <person name="Mau B."/>
            <person name="Shao Y."/>
        </authorList>
    </citation>
    <scope>NUCLEOTIDE SEQUENCE [LARGE SCALE GENOMIC DNA]</scope>
    <source>
        <strain>K12 / MG1655 / ATCC 47076</strain>
    </source>
</reference>
<reference key="4">
    <citation type="journal article" date="2006" name="Mol. Syst. Biol.">
        <title>Highly accurate genome sequences of Escherichia coli K-12 strains MG1655 and W3110.</title>
        <authorList>
            <person name="Hayashi K."/>
            <person name="Morooka N."/>
            <person name="Yamamoto Y."/>
            <person name="Fujita K."/>
            <person name="Isono K."/>
            <person name="Choi S."/>
            <person name="Ohtsubo E."/>
            <person name="Baba T."/>
            <person name="Wanner B.L."/>
            <person name="Mori H."/>
            <person name="Horiuchi T."/>
        </authorList>
    </citation>
    <scope>NUCLEOTIDE SEQUENCE [LARGE SCALE GENOMIC DNA]</scope>
    <source>
        <strain>K12 / W3110 / ATCC 27325 / DSM 5911</strain>
    </source>
</reference>
<reference key="5">
    <citation type="journal article" date="2005" name="J. Biol. Chem.">
        <title>The RNase Z homologue encoded by Escherichia coli elaC gene is RNase BN.</title>
        <authorList>
            <person name="Ezraty B."/>
            <person name="Dahlgren B."/>
            <person name="Deutscher M.P."/>
        </authorList>
    </citation>
    <scope>SHOWS THAT IT IS NOT RNASE BN</scope>
</reference>
<reference key="6">
    <citation type="journal article" date="2005" name="Science">
        <title>Global topology analysis of the Escherichia coli inner membrane proteome.</title>
        <authorList>
            <person name="Daley D.O."/>
            <person name="Rapp M."/>
            <person name="Granseth E."/>
            <person name="Melen K."/>
            <person name="Drew D."/>
            <person name="von Heijne G."/>
        </authorList>
    </citation>
    <scope>SUBCELLULAR LOCATION</scope>
    <scope>TOPOLOGY [LARGE SCALE ANALYSIS]</scope>
    <source>
        <strain>K12 / MG1655 / ATCC 47076</strain>
    </source>
</reference>
<accession>P0A8K8</accession>
<accession>P32146</accession>
<accession>Q2M8I3</accession>
<keyword id="KW-0997">Cell inner membrane</keyword>
<keyword id="KW-1003">Cell membrane</keyword>
<keyword id="KW-0472">Membrane</keyword>
<keyword id="KW-1185">Reference proteome</keyword>
<keyword id="KW-0812">Transmembrane</keyword>
<keyword id="KW-1133">Transmembrane helix</keyword>
<dbReference type="EMBL" id="L19201">
    <property type="protein sequence ID" value="AAB03019.1"/>
    <property type="molecule type" value="Genomic_DNA"/>
</dbReference>
<dbReference type="EMBL" id="U00096">
    <property type="protein sequence ID" value="AAD13448.1"/>
    <property type="molecule type" value="Genomic_DNA"/>
</dbReference>
<dbReference type="EMBL" id="AP009048">
    <property type="protein sequence ID" value="BAE77423.1"/>
    <property type="molecule type" value="Genomic_DNA"/>
</dbReference>
<dbReference type="PIR" id="S40830">
    <property type="entry name" value="S40830"/>
</dbReference>
<dbReference type="RefSeq" id="NP_418322.1">
    <property type="nucleotide sequence ID" value="NC_000913.3"/>
</dbReference>
<dbReference type="RefSeq" id="WP_000920762.1">
    <property type="nucleotide sequence ID" value="NZ_STEB01000017.1"/>
</dbReference>
<dbReference type="BioGRID" id="4260958">
    <property type="interactions" value="25"/>
</dbReference>
<dbReference type="FunCoup" id="P0A8K8">
    <property type="interactions" value="197"/>
</dbReference>
<dbReference type="STRING" id="511145.b3886"/>
<dbReference type="TCDB" id="9.B.126.2.1">
    <property type="family name" value="the putative lipid iv exporter (yhjd) family"/>
</dbReference>
<dbReference type="jPOST" id="P0A8K8"/>
<dbReference type="PaxDb" id="511145-b3886"/>
<dbReference type="DNASU" id="948379"/>
<dbReference type="EnsemblBacteria" id="AAD13448">
    <property type="protein sequence ID" value="AAD13448"/>
    <property type="gene ID" value="b3886"/>
</dbReference>
<dbReference type="GeneID" id="948379"/>
<dbReference type="KEGG" id="ecj:JW3857"/>
<dbReference type="KEGG" id="eco:b3886"/>
<dbReference type="KEGG" id="ecoc:C3026_21005"/>
<dbReference type="PATRIC" id="fig|1411691.4.peg.2825"/>
<dbReference type="EchoBASE" id="EB1797"/>
<dbReference type="eggNOG" id="COG1295">
    <property type="taxonomic scope" value="Bacteria"/>
</dbReference>
<dbReference type="HOGENOM" id="CLU_032288_0_0_6"/>
<dbReference type="InParanoid" id="P0A8K8"/>
<dbReference type="OMA" id="KQPKFRW"/>
<dbReference type="OrthoDB" id="9808671at2"/>
<dbReference type="PhylomeDB" id="P0A8K8"/>
<dbReference type="BioCyc" id="EcoCyc:EG11851-MONOMER"/>
<dbReference type="PRO" id="PR:P0A8K8"/>
<dbReference type="Proteomes" id="UP000000625">
    <property type="component" value="Chromosome"/>
</dbReference>
<dbReference type="GO" id="GO:0005886">
    <property type="term" value="C:plasma membrane"/>
    <property type="evidence" value="ECO:0000314"/>
    <property type="project" value="EcoCyc"/>
</dbReference>
<dbReference type="HAMAP" id="MF_00672">
    <property type="entry name" value="UPF0761"/>
    <property type="match status" value="1"/>
</dbReference>
<dbReference type="InterPro" id="IPR023679">
    <property type="entry name" value="UPF0761_bac"/>
</dbReference>
<dbReference type="InterPro" id="IPR017039">
    <property type="entry name" value="Virul_fac_BrkB"/>
</dbReference>
<dbReference type="NCBIfam" id="NF002457">
    <property type="entry name" value="PRK01637.1"/>
    <property type="match status" value="1"/>
</dbReference>
<dbReference type="NCBIfam" id="TIGR00765">
    <property type="entry name" value="yihY_not_rbn"/>
    <property type="match status" value="1"/>
</dbReference>
<dbReference type="PANTHER" id="PTHR30213">
    <property type="entry name" value="INNER MEMBRANE PROTEIN YHJD"/>
    <property type="match status" value="1"/>
</dbReference>
<dbReference type="PANTHER" id="PTHR30213:SF0">
    <property type="entry name" value="UPF0761 MEMBRANE PROTEIN YIHY"/>
    <property type="match status" value="1"/>
</dbReference>
<dbReference type="Pfam" id="PF03631">
    <property type="entry name" value="Virul_fac_BrkB"/>
    <property type="match status" value="1"/>
</dbReference>
<dbReference type="PIRSF" id="PIRSF035875">
    <property type="entry name" value="RNase_BN"/>
    <property type="match status" value="1"/>
</dbReference>
<protein>
    <recommendedName>
        <fullName>UPF0761 membrane protein YihY</fullName>
    </recommendedName>
</protein>
<organism>
    <name type="scientific">Escherichia coli (strain K12)</name>
    <dbReference type="NCBI Taxonomy" id="83333"/>
    <lineage>
        <taxon>Bacteria</taxon>
        <taxon>Pseudomonadati</taxon>
        <taxon>Pseudomonadota</taxon>
        <taxon>Gammaproteobacteria</taxon>
        <taxon>Enterobacterales</taxon>
        <taxon>Enterobacteriaceae</taxon>
        <taxon>Escherichia</taxon>
    </lineage>
</organism>
<sequence>MLKTIQDKARHRTRPLWAWLKLLWQRIDEDNMTTLAGNLAYVSLLSLVPLVAVVFALFAAFPMFSDVSIQLRHFIFANFLPATGDVIQRYIEQFVANSNKMTAVGACGLIVTALLLMYSIDSALNTIWRSKRARPKIYSFAVYWMILTLGPLLAGASLAISSYLLSLRWASDLNTVIDNVLRIFPLLLSWISFWLLYSIVPTIRVPNRDAIVGAFVAALLFEAGKKGFALYITMFPSYQLIYGVLAVIPILFVWVYWTWCIVLLGAEITVTLGEYRKLKQAAEQEEDDEP</sequence>